<protein>
    <recommendedName>
        <fullName evidence="2">Ubiquitin carboxyl-terminal hydrolase 16</fullName>
        <ecNumber evidence="2">3.4.19.12</ecNumber>
    </recommendedName>
    <alternativeName>
        <fullName evidence="2">Deubiquitinating enzyme 16</fullName>
    </alternativeName>
    <alternativeName>
        <fullName evidence="2">Ubiquitin thioesterase 16</fullName>
    </alternativeName>
    <alternativeName>
        <fullName evidence="2">Ubiquitin-specific-processing protease 16</fullName>
    </alternativeName>
</protein>
<accession>Q99LG0</accession>
<accession>G5E860</accession>
<accession>Q99KM0</accession>
<dbReference type="EC" id="3.4.19.12" evidence="2"/>
<dbReference type="EMBL" id="AK160038">
    <property type="protein sequence ID" value="BAE35580.1"/>
    <property type="molecule type" value="mRNA"/>
</dbReference>
<dbReference type="EMBL" id="AC154631">
    <property type="status" value="NOT_ANNOTATED_CDS"/>
    <property type="molecule type" value="Genomic_DNA"/>
</dbReference>
<dbReference type="EMBL" id="CH466521">
    <property type="protein sequence ID" value="EDK98336.1"/>
    <property type="molecule type" value="Genomic_DNA"/>
</dbReference>
<dbReference type="EMBL" id="BC003278">
    <property type="protein sequence ID" value="AAH03278.1"/>
    <property type="molecule type" value="mRNA"/>
</dbReference>
<dbReference type="EMBL" id="BC004577">
    <property type="protein sequence ID" value="AAH04577.1"/>
    <property type="molecule type" value="mRNA"/>
</dbReference>
<dbReference type="CCDS" id="CCDS28291.1"/>
<dbReference type="RefSeq" id="NP_077220.2">
    <property type="nucleotide sequence ID" value="NM_024258.2"/>
</dbReference>
<dbReference type="RefSeq" id="XP_006523163.1">
    <property type="nucleotide sequence ID" value="XM_006523100.3"/>
</dbReference>
<dbReference type="SMR" id="Q99LG0"/>
<dbReference type="BioGRID" id="216501">
    <property type="interactions" value="9"/>
</dbReference>
<dbReference type="FunCoup" id="Q99LG0">
    <property type="interactions" value="5065"/>
</dbReference>
<dbReference type="STRING" id="10090.ENSMUSP00000026710"/>
<dbReference type="MEROPS" id="C19.050"/>
<dbReference type="GlyGen" id="Q99LG0">
    <property type="glycosylation" value="1 site, 1 O-linked glycan (1 site)"/>
</dbReference>
<dbReference type="iPTMnet" id="Q99LG0"/>
<dbReference type="PhosphoSitePlus" id="Q99LG0"/>
<dbReference type="PaxDb" id="10090-ENSMUSP00000026710"/>
<dbReference type="PeptideAtlas" id="Q99LG0"/>
<dbReference type="ProteomicsDB" id="298455"/>
<dbReference type="Pumba" id="Q99LG0"/>
<dbReference type="Antibodypedia" id="6359">
    <property type="antibodies" value="358 antibodies from 33 providers"/>
</dbReference>
<dbReference type="DNASU" id="74112"/>
<dbReference type="Ensembl" id="ENSMUST00000026710.12">
    <property type="protein sequence ID" value="ENSMUSP00000026710.6"/>
    <property type="gene ID" value="ENSMUSG00000025616.15"/>
</dbReference>
<dbReference type="GeneID" id="74112"/>
<dbReference type="KEGG" id="mmu:74112"/>
<dbReference type="UCSC" id="uc007zuk.2">
    <property type="organism name" value="mouse"/>
</dbReference>
<dbReference type="AGR" id="MGI:1921362"/>
<dbReference type="CTD" id="10600"/>
<dbReference type="MGI" id="MGI:1921362">
    <property type="gene designation" value="Usp16"/>
</dbReference>
<dbReference type="VEuPathDB" id="HostDB:ENSMUSG00000025616"/>
<dbReference type="eggNOG" id="KOG1873">
    <property type="taxonomic scope" value="Eukaryota"/>
</dbReference>
<dbReference type="GeneTree" id="ENSGT00940000156013"/>
<dbReference type="HOGENOM" id="CLU_007938_1_0_1"/>
<dbReference type="InParanoid" id="Q99LG0"/>
<dbReference type="OMA" id="MAAGHYV"/>
<dbReference type="OrthoDB" id="2020758at2759"/>
<dbReference type="PhylomeDB" id="Q99LG0"/>
<dbReference type="TreeFam" id="TF326075"/>
<dbReference type="Reactome" id="R-MMU-5689880">
    <property type="pathway name" value="Ub-specific processing proteases"/>
</dbReference>
<dbReference type="BioGRID-ORCS" id="74112">
    <property type="hits" value="13 hits in 80 CRISPR screens"/>
</dbReference>
<dbReference type="ChiTaRS" id="Usp16">
    <property type="organism name" value="mouse"/>
</dbReference>
<dbReference type="PRO" id="PR:Q99LG0"/>
<dbReference type="Proteomes" id="UP000000589">
    <property type="component" value="Chromosome 16"/>
</dbReference>
<dbReference type="RNAct" id="Q99LG0">
    <property type="molecule type" value="protein"/>
</dbReference>
<dbReference type="Bgee" id="ENSMUSG00000025616">
    <property type="expression patterns" value="Expressed in animal zygote and 269 other cell types or tissues"/>
</dbReference>
<dbReference type="ExpressionAtlas" id="Q99LG0">
    <property type="expression patterns" value="baseline and differential"/>
</dbReference>
<dbReference type="GO" id="GO:0005737">
    <property type="term" value="C:cytoplasm"/>
    <property type="evidence" value="ECO:0000250"/>
    <property type="project" value="UniProtKB"/>
</dbReference>
<dbReference type="GO" id="GO:0005634">
    <property type="term" value="C:nucleus"/>
    <property type="evidence" value="ECO:0000250"/>
    <property type="project" value="UniProtKB"/>
</dbReference>
<dbReference type="GO" id="GO:0004843">
    <property type="term" value="F:cysteine-type deubiquitinase activity"/>
    <property type="evidence" value="ECO:0000250"/>
    <property type="project" value="UniProtKB"/>
</dbReference>
<dbReference type="GO" id="GO:0004197">
    <property type="term" value="F:cysteine-type endopeptidase activity"/>
    <property type="evidence" value="ECO:0000250"/>
    <property type="project" value="UniProtKB"/>
</dbReference>
<dbReference type="GO" id="GO:0042393">
    <property type="term" value="F:histone binding"/>
    <property type="evidence" value="ECO:0000250"/>
    <property type="project" value="UniProtKB"/>
</dbReference>
<dbReference type="GO" id="GO:0140950">
    <property type="term" value="F:histone H2A deubiquitinase activity"/>
    <property type="evidence" value="ECO:0000315"/>
    <property type="project" value="UniProtKB"/>
</dbReference>
<dbReference type="GO" id="GO:0043024">
    <property type="term" value="F:ribosomal small subunit binding"/>
    <property type="evidence" value="ECO:0000250"/>
    <property type="project" value="UniProtKB"/>
</dbReference>
<dbReference type="GO" id="GO:0003713">
    <property type="term" value="F:transcription coactivator activity"/>
    <property type="evidence" value="ECO:0000250"/>
    <property type="project" value="UniProtKB"/>
</dbReference>
<dbReference type="GO" id="GO:0043130">
    <property type="term" value="F:ubiquitin binding"/>
    <property type="evidence" value="ECO:0000250"/>
    <property type="project" value="UniProtKB"/>
</dbReference>
<dbReference type="GO" id="GO:0008270">
    <property type="term" value="F:zinc ion binding"/>
    <property type="evidence" value="ECO:0000250"/>
    <property type="project" value="UniProtKB"/>
</dbReference>
<dbReference type="GO" id="GO:0051301">
    <property type="term" value="P:cell division"/>
    <property type="evidence" value="ECO:0007669"/>
    <property type="project" value="UniProtKB-KW"/>
</dbReference>
<dbReference type="GO" id="GO:0006974">
    <property type="term" value="P:DNA damage response"/>
    <property type="evidence" value="ECO:0000250"/>
    <property type="project" value="UniProtKB"/>
</dbReference>
<dbReference type="GO" id="GO:0140014">
    <property type="term" value="P:mitotic nuclear division"/>
    <property type="evidence" value="ECO:0007669"/>
    <property type="project" value="UniProtKB-UniRule"/>
</dbReference>
<dbReference type="GO" id="GO:0035520">
    <property type="term" value="P:monoubiquitinated protein deubiquitination"/>
    <property type="evidence" value="ECO:0000250"/>
    <property type="project" value="UniProtKB"/>
</dbReference>
<dbReference type="GO" id="GO:0045893">
    <property type="term" value="P:positive regulation of DNA-templated transcription"/>
    <property type="evidence" value="ECO:0000250"/>
    <property type="project" value="UniProtKB"/>
</dbReference>
<dbReference type="GO" id="GO:0090070">
    <property type="term" value="P:positive regulation of ribosome biogenesis"/>
    <property type="evidence" value="ECO:0000250"/>
    <property type="project" value="UniProtKB"/>
</dbReference>
<dbReference type="GO" id="GO:0045944">
    <property type="term" value="P:positive regulation of transcription by RNA polymerase II"/>
    <property type="evidence" value="ECO:0000315"/>
    <property type="project" value="UniProtKB"/>
</dbReference>
<dbReference type="GO" id="GO:0045901">
    <property type="term" value="P:positive regulation of translational elongation"/>
    <property type="evidence" value="ECO:0000250"/>
    <property type="project" value="UniProtKB"/>
</dbReference>
<dbReference type="GO" id="GO:0051289">
    <property type="term" value="P:protein homotetramerization"/>
    <property type="evidence" value="ECO:0000250"/>
    <property type="project" value="UniProtKB"/>
</dbReference>
<dbReference type="GO" id="GO:0006508">
    <property type="term" value="P:proteolysis"/>
    <property type="evidence" value="ECO:0007669"/>
    <property type="project" value="UniProtKB-KW"/>
</dbReference>
<dbReference type="GO" id="GO:0051726">
    <property type="term" value="P:regulation of cell cycle"/>
    <property type="evidence" value="ECO:0007669"/>
    <property type="project" value="InterPro"/>
</dbReference>
<dbReference type="GO" id="GO:0006357">
    <property type="term" value="P:regulation of transcription by RNA polymerase II"/>
    <property type="evidence" value="ECO:0000314"/>
    <property type="project" value="UniProtKB"/>
</dbReference>
<dbReference type="CDD" id="cd02667">
    <property type="entry name" value="Peptidase_C19K"/>
    <property type="match status" value="1"/>
</dbReference>
<dbReference type="FunFam" id="3.30.40.10:FF:000147">
    <property type="entry name" value="Ubiquitin carboxyl-terminal hydrolase 16"/>
    <property type="match status" value="1"/>
</dbReference>
<dbReference type="FunFam" id="3.90.70.10:FF:000045">
    <property type="entry name" value="Ubiquitin carboxyl-terminal hydrolase 16"/>
    <property type="match status" value="1"/>
</dbReference>
<dbReference type="FunFam" id="3.90.70.10:FF:000175">
    <property type="entry name" value="Ubiquitin carboxyl-terminal hydrolase 16"/>
    <property type="match status" value="1"/>
</dbReference>
<dbReference type="Gene3D" id="3.90.70.10">
    <property type="entry name" value="Cysteine proteinases"/>
    <property type="match status" value="2"/>
</dbReference>
<dbReference type="Gene3D" id="3.30.40.10">
    <property type="entry name" value="Zinc/RING finger domain, C3HC4 (zinc finger)"/>
    <property type="match status" value="1"/>
</dbReference>
<dbReference type="HAMAP" id="MF_03062">
    <property type="entry name" value="UBP16"/>
    <property type="match status" value="1"/>
</dbReference>
<dbReference type="InterPro" id="IPR038765">
    <property type="entry name" value="Papain-like_cys_pep_sf"/>
</dbReference>
<dbReference type="InterPro" id="IPR050164">
    <property type="entry name" value="Peptidase_C19"/>
</dbReference>
<dbReference type="InterPro" id="IPR001394">
    <property type="entry name" value="Peptidase_C19_UCH"/>
</dbReference>
<dbReference type="InterPro" id="IPR030849">
    <property type="entry name" value="UBP16"/>
</dbReference>
<dbReference type="InterPro" id="IPR018200">
    <property type="entry name" value="USP_CS"/>
</dbReference>
<dbReference type="InterPro" id="IPR028889">
    <property type="entry name" value="USP_dom"/>
</dbReference>
<dbReference type="InterPro" id="IPR013083">
    <property type="entry name" value="Znf_RING/FYVE/PHD"/>
</dbReference>
<dbReference type="InterPro" id="IPR001607">
    <property type="entry name" value="Znf_UBP"/>
</dbReference>
<dbReference type="PANTHER" id="PTHR24006">
    <property type="entry name" value="UBIQUITIN CARBOXYL-TERMINAL HYDROLASE"/>
    <property type="match status" value="1"/>
</dbReference>
<dbReference type="PANTHER" id="PTHR24006:SF852">
    <property type="entry name" value="UBIQUITIN CARBOXYL-TERMINAL HYDROLASE"/>
    <property type="match status" value="1"/>
</dbReference>
<dbReference type="Pfam" id="PF00443">
    <property type="entry name" value="UCH"/>
    <property type="match status" value="1"/>
</dbReference>
<dbReference type="Pfam" id="PF02148">
    <property type="entry name" value="zf-UBP"/>
    <property type="match status" value="1"/>
</dbReference>
<dbReference type="SMART" id="SM00290">
    <property type="entry name" value="ZnF_UBP"/>
    <property type="match status" value="1"/>
</dbReference>
<dbReference type="SUPFAM" id="SSF54001">
    <property type="entry name" value="Cysteine proteinases"/>
    <property type="match status" value="1"/>
</dbReference>
<dbReference type="SUPFAM" id="SSF57850">
    <property type="entry name" value="RING/U-box"/>
    <property type="match status" value="1"/>
</dbReference>
<dbReference type="PROSITE" id="PS00972">
    <property type="entry name" value="USP_1"/>
    <property type="match status" value="1"/>
</dbReference>
<dbReference type="PROSITE" id="PS00973">
    <property type="entry name" value="USP_2"/>
    <property type="match status" value="1"/>
</dbReference>
<dbReference type="PROSITE" id="PS50235">
    <property type="entry name" value="USP_3"/>
    <property type="match status" value="1"/>
</dbReference>
<dbReference type="PROSITE" id="PS50271">
    <property type="entry name" value="ZF_UBP"/>
    <property type="match status" value="1"/>
</dbReference>
<reference key="1">
    <citation type="journal article" date="2005" name="Science">
        <title>The transcriptional landscape of the mammalian genome.</title>
        <authorList>
            <person name="Carninci P."/>
            <person name="Kasukawa T."/>
            <person name="Katayama S."/>
            <person name="Gough J."/>
            <person name="Frith M.C."/>
            <person name="Maeda N."/>
            <person name="Oyama R."/>
            <person name="Ravasi T."/>
            <person name="Lenhard B."/>
            <person name="Wells C."/>
            <person name="Kodzius R."/>
            <person name="Shimokawa K."/>
            <person name="Bajic V.B."/>
            <person name="Brenner S.E."/>
            <person name="Batalov S."/>
            <person name="Forrest A.R."/>
            <person name="Zavolan M."/>
            <person name="Davis M.J."/>
            <person name="Wilming L.G."/>
            <person name="Aidinis V."/>
            <person name="Allen J.E."/>
            <person name="Ambesi-Impiombato A."/>
            <person name="Apweiler R."/>
            <person name="Aturaliya R.N."/>
            <person name="Bailey T.L."/>
            <person name="Bansal M."/>
            <person name="Baxter L."/>
            <person name="Beisel K.W."/>
            <person name="Bersano T."/>
            <person name="Bono H."/>
            <person name="Chalk A.M."/>
            <person name="Chiu K.P."/>
            <person name="Choudhary V."/>
            <person name="Christoffels A."/>
            <person name="Clutterbuck D.R."/>
            <person name="Crowe M.L."/>
            <person name="Dalla E."/>
            <person name="Dalrymple B.P."/>
            <person name="de Bono B."/>
            <person name="Della Gatta G."/>
            <person name="di Bernardo D."/>
            <person name="Down T."/>
            <person name="Engstrom P."/>
            <person name="Fagiolini M."/>
            <person name="Faulkner G."/>
            <person name="Fletcher C.F."/>
            <person name="Fukushima T."/>
            <person name="Furuno M."/>
            <person name="Futaki S."/>
            <person name="Gariboldi M."/>
            <person name="Georgii-Hemming P."/>
            <person name="Gingeras T.R."/>
            <person name="Gojobori T."/>
            <person name="Green R.E."/>
            <person name="Gustincich S."/>
            <person name="Harbers M."/>
            <person name="Hayashi Y."/>
            <person name="Hensch T.K."/>
            <person name="Hirokawa N."/>
            <person name="Hill D."/>
            <person name="Huminiecki L."/>
            <person name="Iacono M."/>
            <person name="Ikeo K."/>
            <person name="Iwama A."/>
            <person name="Ishikawa T."/>
            <person name="Jakt M."/>
            <person name="Kanapin A."/>
            <person name="Katoh M."/>
            <person name="Kawasawa Y."/>
            <person name="Kelso J."/>
            <person name="Kitamura H."/>
            <person name="Kitano H."/>
            <person name="Kollias G."/>
            <person name="Krishnan S.P."/>
            <person name="Kruger A."/>
            <person name="Kummerfeld S.K."/>
            <person name="Kurochkin I.V."/>
            <person name="Lareau L.F."/>
            <person name="Lazarevic D."/>
            <person name="Lipovich L."/>
            <person name="Liu J."/>
            <person name="Liuni S."/>
            <person name="McWilliam S."/>
            <person name="Madan Babu M."/>
            <person name="Madera M."/>
            <person name="Marchionni L."/>
            <person name="Matsuda H."/>
            <person name="Matsuzawa S."/>
            <person name="Miki H."/>
            <person name="Mignone F."/>
            <person name="Miyake S."/>
            <person name="Morris K."/>
            <person name="Mottagui-Tabar S."/>
            <person name="Mulder N."/>
            <person name="Nakano N."/>
            <person name="Nakauchi H."/>
            <person name="Ng P."/>
            <person name="Nilsson R."/>
            <person name="Nishiguchi S."/>
            <person name="Nishikawa S."/>
            <person name="Nori F."/>
            <person name="Ohara O."/>
            <person name="Okazaki Y."/>
            <person name="Orlando V."/>
            <person name="Pang K.C."/>
            <person name="Pavan W.J."/>
            <person name="Pavesi G."/>
            <person name="Pesole G."/>
            <person name="Petrovsky N."/>
            <person name="Piazza S."/>
            <person name="Reed J."/>
            <person name="Reid J.F."/>
            <person name="Ring B.Z."/>
            <person name="Ringwald M."/>
            <person name="Rost B."/>
            <person name="Ruan Y."/>
            <person name="Salzberg S.L."/>
            <person name="Sandelin A."/>
            <person name="Schneider C."/>
            <person name="Schoenbach C."/>
            <person name="Sekiguchi K."/>
            <person name="Semple C.A."/>
            <person name="Seno S."/>
            <person name="Sessa L."/>
            <person name="Sheng Y."/>
            <person name="Shibata Y."/>
            <person name="Shimada H."/>
            <person name="Shimada K."/>
            <person name="Silva D."/>
            <person name="Sinclair B."/>
            <person name="Sperling S."/>
            <person name="Stupka E."/>
            <person name="Sugiura K."/>
            <person name="Sultana R."/>
            <person name="Takenaka Y."/>
            <person name="Taki K."/>
            <person name="Tammoja K."/>
            <person name="Tan S.L."/>
            <person name="Tang S."/>
            <person name="Taylor M.S."/>
            <person name="Tegner J."/>
            <person name="Teichmann S.A."/>
            <person name="Ueda H.R."/>
            <person name="van Nimwegen E."/>
            <person name="Verardo R."/>
            <person name="Wei C.L."/>
            <person name="Yagi K."/>
            <person name="Yamanishi H."/>
            <person name="Zabarovsky E."/>
            <person name="Zhu S."/>
            <person name="Zimmer A."/>
            <person name="Hide W."/>
            <person name="Bult C."/>
            <person name="Grimmond S.M."/>
            <person name="Teasdale R.D."/>
            <person name="Liu E.T."/>
            <person name="Brusic V."/>
            <person name="Quackenbush J."/>
            <person name="Wahlestedt C."/>
            <person name="Mattick J.S."/>
            <person name="Hume D.A."/>
            <person name="Kai C."/>
            <person name="Sasaki D."/>
            <person name="Tomaru Y."/>
            <person name="Fukuda S."/>
            <person name="Kanamori-Katayama M."/>
            <person name="Suzuki M."/>
            <person name="Aoki J."/>
            <person name="Arakawa T."/>
            <person name="Iida J."/>
            <person name="Imamura K."/>
            <person name="Itoh M."/>
            <person name="Kato T."/>
            <person name="Kawaji H."/>
            <person name="Kawagashira N."/>
            <person name="Kawashima T."/>
            <person name="Kojima M."/>
            <person name="Kondo S."/>
            <person name="Konno H."/>
            <person name="Nakano K."/>
            <person name="Ninomiya N."/>
            <person name="Nishio T."/>
            <person name="Okada M."/>
            <person name="Plessy C."/>
            <person name="Shibata K."/>
            <person name="Shiraki T."/>
            <person name="Suzuki S."/>
            <person name="Tagami M."/>
            <person name="Waki K."/>
            <person name="Watahiki A."/>
            <person name="Okamura-Oho Y."/>
            <person name="Suzuki H."/>
            <person name="Kawai J."/>
            <person name="Hayashizaki Y."/>
        </authorList>
    </citation>
    <scope>NUCLEOTIDE SEQUENCE [LARGE SCALE MRNA]</scope>
    <source>
        <strain>C57BL/6J</strain>
    </source>
</reference>
<reference key="2">
    <citation type="journal article" date="2009" name="PLoS Biol.">
        <title>Lineage-specific biology revealed by a finished genome assembly of the mouse.</title>
        <authorList>
            <person name="Church D.M."/>
            <person name="Goodstadt L."/>
            <person name="Hillier L.W."/>
            <person name="Zody M.C."/>
            <person name="Goldstein S."/>
            <person name="She X."/>
            <person name="Bult C.J."/>
            <person name="Agarwala R."/>
            <person name="Cherry J.L."/>
            <person name="DiCuccio M."/>
            <person name="Hlavina W."/>
            <person name="Kapustin Y."/>
            <person name="Meric P."/>
            <person name="Maglott D."/>
            <person name="Birtle Z."/>
            <person name="Marques A.C."/>
            <person name="Graves T."/>
            <person name="Zhou S."/>
            <person name="Teague B."/>
            <person name="Potamousis K."/>
            <person name="Churas C."/>
            <person name="Place M."/>
            <person name="Herschleb J."/>
            <person name="Runnheim R."/>
            <person name="Forrest D."/>
            <person name="Amos-Landgraf J."/>
            <person name="Schwartz D.C."/>
            <person name="Cheng Z."/>
            <person name="Lindblad-Toh K."/>
            <person name="Eichler E.E."/>
            <person name="Ponting C.P."/>
        </authorList>
    </citation>
    <scope>NUCLEOTIDE SEQUENCE [LARGE SCALE GENOMIC DNA]</scope>
    <source>
        <strain>C57BL/6J</strain>
    </source>
</reference>
<reference key="3">
    <citation type="submission" date="2005-07" db="EMBL/GenBank/DDBJ databases">
        <authorList>
            <person name="Mural R.J."/>
            <person name="Adams M.D."/>
            <person name="Myers E.W."/>
            <person name="Smith H.O."/>
            <person name="Venter J.C."/>
        </authorList>
    </citation>
    <scope>NUCLEOTIDE SEQUENCE [LARGE SCALE GENOMIC DNA]</scope>
</reference>
<reference key="4">
    <citation type="journal article" date="2004" name="Genome Res.">
        <title>The status, quality, and expansion of the NIH full-length cDNA project: the Mammalian Gene Collection (MGC).</title>
        <authorList>
            <consortium name="The MGC Project Team"/>
        </authorList>
    </citation>
    <scope>NUCLEOTIDE SEQUENCE [LARGE SCALE MRNA]</scope>
    <source>
        <strain>Czech II</strain>
        <strain>FVB/N</strain>
        <tissue>Mammary tumor</tissue>
    </source>
</reference>
<reference key="5">
    <citation type="journal article" date="2007" name="Proc. Natl. Acad. Sci. U.S.A.">
        <title>Large-scale phosphorylation analysis of mouse liver.</title>
        <authorList>
            <person name="Villen J."/>
            <person name="Beausoleil S.A."/>
            <person name="Gerber S.A."/>
            <person name="Gygi S.P."/>
        </authorList>
    </citation>
    <scope>PHOSPHORYLATION [LARGE SCALE ANALYSIS] AT SER-520</scope>
    <scope>IDENTIFICATION BY MASS SPECTROMETRY [LARGE SCALE ANALYSIS]</scope>
    <source>
        <tissue>Liver</tissue>
    </source>
</reference>
<reference key="6">
    <citation type="journal article" date="2010" name="Cell">
        <title>A tissue-specific atlas of mouse protein phosphorylation and expression.</title>
        <authorList>
            <person name="Huttlin E.L."/>
            <person name="Jedrychowski M.P."/>
            <person name="Elias J.E."/>
            <person name="Goswami T."/>
            <person name="Rad R."/>
            <person name="Beausoleil S.A."/>
            <person name="Villen J."/>
            <person name="Haas W."/>
            <person name="Sowa M.E."/>
            <person name="Gygi S.P."/>
        </authorList>
    </citation>
    <scope>PHOSPHORYLATION [LARGE SCALE ANALYSIS] AT SER-414 AND SER-531</scope>
    <scope>IDENTIFICATION BY MASS SPECTROMETRY [LARGE SCALE ANALYSIS]</scope>
    <source>
        <tissue>Liver</tissue>
        <tissue>Pancreas</tissue>
        <tissue>Spleen</tissue>
        <tissue>Testis</tissue>
    </source>
</reference>
<reference key="7">
    <citation type="journal article" date="2013" name="Mol. Cell">
        <title>The Aurora B kinase and the Polycomb protein Ring1B combine to regulate active promoters in quiescent lymphocytes.</title>
        <authorList>
            <person name="Frangini A."/>
            <person name="Sjoberg M."/>
            <person name="Roman-Trufero M."/>
            <person name="Dharmalingam G."/>
            <person name="Haberle V."/>
            <person name="Bartke T."/>
            <person name="Lenhard B."/>
            <person name="Malumbres M."/>
            <person name="Vidal M."/>
            <person name="Dillon N."/>
        </authorList>
    </citation>
    <scope>FUNCTION</scope>
    <scope>PHOSPHORYLATION</scope>
</reference>
<reference key="8">
    <citation type="journal article" date="2013" name="Nature">
        <title>Usp16 contributes to somatic stem-cell defects in Down's syndrome.</title>
        <authorList>
            <person name="Adorno M."/>
            <person name="Sikandar S."/>
            <person name="Mitra S.S."/>
            <person name="Kuo A."/>
            <person name="Nicolis Di Robilant B."/>
            <person name="Haro-Acosta V."/>
            <person name="Ouadah Y."/>
            <person name="Quarta M."/>
            <person name="Rodriguez J."/>
            <person name="Qian D."/>
            <person name="Reddy V.M."/>
            <person name="Cheshier S."/>
            <person name="Garner C.C."/>
            <person name="Clarke M.F."/>
        </authorList>
    </citation>
    <scope>UP-REGULATION IN DOWN SYNDROME MODELS</scope>
</reference>
<reference key="9">
    <citation type="journal article" date="2022" name="Sci. Adv.">
        <title>Loss-of-function mutations in CEP78 cause male infertility in humans and mice.</title>
        <authorList>
            <person name="Zhang X."/>
            <person name="Zheng R."/>
            <person name="Liang C."/>
            <person name="Liu H."/>
            <person name="Zhang X."/>
            <person name="Ma Y."/>
            <person name="Liu M."/>
            <person name="Zhang W."/>
            <person name="Yang Y."/>
            <person name="Liu M."/>
            <person name="Jiang C."/>
            <person name="Ren Q."/>
            <person name="Wang Y."/>
            <person name="Chen S."/>
            <person name="Yang Y."/>
            <person name="Shen Y."/>
        </authorList>
    </citation>
    <scope>FUNCTION</scope>
    <scope>INTERACTION WITH CEP78</scope>
</reference>
<organism>
    <name type="scientific">Mus musculus</name>
    <name type="common">Mouse</name>
    <dbReference type="NCBI Taxonomy" id="10090"/>
    <lineage>
        <taxon>Eukaryota</taxon>
        <taxon>Metazoa</taxon>
        <taxon>Chordata</taxon>
        <taxon>Craniata</taxon>
        <taxon>Vertebrata</taxon>
        <taxon>Euteleostomi</taxon>
        <taxon>Mammalia</taxon>
        <taxon>Eutheria</taxon>
        <taxon>Euarchontoglires</taxon>
        <taxon>Glires</taxon>
        <taxon>Rodentia</taxon>
        <taxon>Myomorpha</taxon>
        <taxon>Muroidea</taxon>
        <taxon>Muridae</taxon>
        <taxon>Murinae</taxon>
        <taxon>Mus</taxon>
        <taxon>Mus</taxon>
    </lineage>
</organism>
<evidence type="ECO:0000250" key="1">
    <source>
        <dbReference type="UniProtKB" id="Q9Y5T5"/>
    </source>
</evidence>
<evidence type="ECO:0000255" key="2">
    <source>
        <dbReference type="HAMAP-Rule" id="MF_03062"/>
    </source>
</evidence>
<evidence type="ECO:0000255" key="3">
    <source>
        <dbReference type="PROSITE-ProRule" id="PRU00502"/>
    </source>
</evidence>
<evidence type="ECO:0000256" key="4">
    <source>
        <dbReference type="SAM" id="MobiDB-lite"/>
    </source>
</evidence>
<evidence type="ECO:0000269" key="5">
    <source>
    </source>
</evidence>
<evidence type="ECO:0000269" key="6">
    <source>
    </source>
</evidence>
<evidence type="ECO:0000305" key="7"/>
<evidence type="ECO:0000305" key="8">
    <source>
    </source>
</evidence>
<evidence type="ECO:0007744" key="9">
    <source>
    </source>
</evidence>
<evidence type="ECO:0007744" key="10">
    <source>
    </source>
</evidence>
<name>UBP16_MOUSE</name>
<sequence length="825" mass="93434">MGKKRTKGRSAPDTVASESAEPVCRHLRKGLEQGNLKKALVNVEWNICQDCKTDNKVKDKPEEEAEDPSVWLCLKCGHQGCGRDSQEQHALKHYTTPRSEPHYLVLSLDNWSVWCYKCDEEVKYCSSNRLGQVVDYVRKQAGVRTSKPAEKNNGHIELENKKLEKESKNEQEREKSENLAKETIPMDSASQITVKGLSNLGNTCFFNAVMQNLSQTPVLRELLKEVKMSGTIVKIEPPDLALTEPLEVNLEPPGPLTLAMSQFLSEMQENKKRVVTPKELFSQVCKKATRFKGYQQQDSQELLRYLLDGMRAEEHQRVSKGILKAFGNSTEKLDEEVKNKVKDYEKKKAIPSFVDRIFGGELTSTIMCDECRTVSLVHESFLDLSLPVLDDQSGKKSINDKNVKMTMEEEDKDSEEEKDDSYMKSRSDLPSGTSKHLQKKAKKQAKKQAKNQRRQQKIQERFLHFNELCATDYTEDNEREADTALAGEVEVDTDSTHGSQEEATQIELSVNQKDLDGQESMIERTPDVQESPEDLGVKSANTESDLGIVTPAPECPRDFNGAFLEERTSGELDIINGLKNLNLNAAVDPDEINIEIPNDSHSAPKVYEVMNEDPETAFCTLANREAFSTDECSIQHCLYQFTRNEKLQDANKLLCEVCSRRQCNGPKANIKGDRRHVYTNAKKQMLVSLAPPVLTLHLKRFQQAGFNLRKVNKHIKFPEILDLAPFCTLKCKNVAEESTRVLYSLYGVVEHSGTMRSGHYTAYAKERTASCHLSNLVLHGDIPQDCEMESTKGQWFHISDTHVQAVPITKVLNSQAYLLFYERIL</sequence>
<gene>
    <name type="primary">Usp16</name>
</gene>
<feature type="chain" id="PRO_0000367503" description="Ubiquitin carboxyl-terminal hydrolase 16">
    <location>
        <begin position="1"/>
        <end position="825"/>
    </location>
</feature>
<feature type="domain" description="USP">
    <location>
        <begin position="195"/>
        <end position="824"/>
    </location>
</feature>
<feature type="zinc finger region" description="UBP-type" evidence="3">
    <location>
        <begin position="22"/>
        <end position="141"/>
    </location>
</feature>
<feature type="region of interest" description="Disordered" evidence="4">
    <location>
        <begin position="1"/>
        <end position="20"/>
    </location>
</feature>
<feature type="region of interest" description="Disordered" evidence="4">
    <location>
        <begin position="164"/>
        <end position="184"/>
    </location>
</feature>
<feature type="region of interest" description="Disordered" evidence="4">
    <location>
        <begin position="393"/>
        <end position="456"/>
    </location>
</feature>
<feature type="compositionally biased region" description="Basic and acidic residues" evidence="4">
    <location>
        <begin position="164"/>
        <end position="180"/>
    </location>
</feature>
<feature type="compositionally biased region" description="Basic and acidic residues" evidence="4">
    <location>
        <begin position="393"/>
        <end position="407"/>
    </location>
</feature>
<feature type="compositionally biased region" description="Acidic residues" evidence="4">
    <location>
        <begin position="408"/>
        <end position="419"/>
    </location>
</feature>
<feature type="compositionally biased region" description="Basic residues" evidence="4">
    <location>
        <begin position="436"/>
        <end position="456"/>
    </location>
</feature>
<feature type="active site" description="Nucleophile" evidence="2">
    <location>
        <position position="204"/>
    </location>
</feature>
<feature type="active site" description="Proton acceptor" evidence="2">
    <location>
        <position position="759"/>
    </location>
</feature>
<feature type="binding site" evidence="3">
    <location>
        <position position="24"/>
    </location>
    <ligand>
        <name>Zn(2+)</name>
        <dbReference type="ChEBI" id="CHEBI:29105"/>
        <label>1</label>
    </ligand>
</feature>
<feature type="binding site" evidence="3">
    <location>
        <position position="26"/>
    </location>
    <ligand>
        <name>Zn(2+)</name>
        <dbReference type="ChEBI" id="CHEBI:29105"/>
        <label>1</label>
    </ligand>
</feature>
<feature type="binding site" evidence="3">
    <location>
        <position position="48"/>
    </location>
    <ligand>
        <name>Zn(2+)</name>
        <dbReference type="ChEBI" id="CHEBI:29105"/>
        <label>2</label>
    </ligand>
</feature>
<feature type="binding site" evidence="3">
    <location>
        <position position="51"/>
    </location>
    <ligand>
        <name>Zn(2+)</name>
        <dbReference type="ChEBI" id="CHEBI:29105"/>
        <label>2</label>
    </ligand>
</feature>
<feature type="binding site" evidence="3">
    <location>
        <position position="73"/>
    </location>
    <ligand>
        <name>Zn(2+)</name>
        <dbReference type="ChEBI" id="CHEBI:29105"/>
        <label>3</label>
    </ligand>
</feature>
<feature type="binding site" evidence="3">
    <location>
        <position position="76"/>
    </location>
    <ligand>
        <name>Zn(2+)</name>
        <dbReference type="ChEBI" id="CHEBI:29105"/>
        <label>3</label>
    </ligand>
</feature>
<feature type="binding site" evidence="3">
    <location>
        <position position="81"/>
    </location>
    <ligand>
        <name>Zn(2+)</name>
        <dbReference type="ChEBI" id="CHEBI:29105"/>
        <label>2</label>
    </ligand>
</feature>
<feature type="binding site" evidence="3">
    <location>
        <position position="89"/>
    </location>
    <ligand>
        <name>Zn(2+)</name>
        <dbReference type="ChEBI" id="CHEBI:29105"/>
        <label>2</label>
    </ligand>
</feature>
<feature type="binding site" evidence="3">
    <location>
        <position position="93"/>
    </location>
    <ligand>
        <name>Zn(2+)</name>
        <dbReference type="ChEBI" id="CHEBI:29105"/>
        <label>3</label>
    </ligand>
</feature>
<feature type="binding site" evidence="3">
    <location>
        <position position="102"/>
    </location>
    <ligand>
        <name>Zn(2+)</name>
        <dbReference type="ChEBI" id="CHEBI:29105"/>
        <label>3</label>
    </ligand>
</feature>
<feature type="binding site" evidence="3">
    <location>
        <position position="115"/>
    </location>
    <ligand>
        <name>Zn(2+)</name>
        <dbReference type="ChEBI" id="CHEBI:29105"/>
        <label>1</label>
    </ligand>
</feature>
<feature type="binding site" evidence="3">
    <location>
        <position position="118"/>
    </location>
    <ligand>
        <name>Zn(2+)</name>
        <dbReference type="ChEBI" id="CHEBI:29105"/>
        <label>1</label>
    </ligand>
</feature>
<feature type="modified residue" description="Phosphoserine" evidence="1">
    <location>
        <position position="188"/>
    </location>
</feature>
<feature type="modified residue" description="Phosphoserine" evidence="10">
    <location>
        <position position="414"/>
    </location>
</feature>
<feature type="modified residue" description="Phosphoserine" evidence="9">
    <location>
        <position position="520"/>
    </location>
</feature>
<feature type="modified residue" description="Phosphoserine" evidence="10">
    <location>
        <position position="531"/>
    </location>
</feature>
<feature type="cross-link" description="Glycyl lysine isopeptide (Lys-Gly) (interchain with G-Cter in SUMO2)" evidence="1">
    <location>
        <position position="139"/>
    </location>
</feature>
<feature type="sequence conflict" description="In Ref. 1; BAE35580 and 4; AAH03278." evidence="7" ref="1 4">
    <original>R</original>
    <variation>K</variation>
    <location>
        <position position="173"/>
    </location>
</feature>
<comment type="function">
    <text evidence="2 5 6">Specifically deubiquitinates 'Lys-120' of histone H2A (H2AK119Ub), a specific tag for epigenetic transcriptional repression, thereby acting as a coactivator (PubMed:24034696). Deubiquitination of histone H2A is a prerequisite for subsequent phosphorylation at 'Ser-11' of histone H3 (H3S10ph), and is required for chromosome segregation when cells enter into mitosis (PubMed:24034696). In resting B- and T-lymphocytes, phosphorylation by AURKB leads to enhance its activity, thereby maintaining transcription in resting lymphocytes (PubMed:24034696). Regulates Hox gene expression via histone H2A deubiquitination. Prefers nucleosomal substrates. Does not deubiquitinate histone H2B. Also deubiquitinates non-histone proteins, such as ribosomal protein RPS27A: deubiquitination of monoubiquitinated RPS27A promotes maturation of the 40S ribosomal subunit. Also mediates deubiquitination of tektin proteins (TEKT1, TEKT2, TEK3, TEKT4 and TEKT5), promoting their stability (PubMed:36206347).</text>
</comment>
<comment type="catalytic activity">
    <reaction evidence="2">
        <text>Thiol-dependent hydrolysis of ester, thioester, amide, peptide and isopeptide bonds formed by the C-terminal Gly of ubiquitin (a 76-residue protein attached to proteins as an intracellular targeting signal).</text>
        <dbReference type="EC" id="3.4.19.12"/>
    </reaction>
</comment>
<comment type="subunit">
    <text evidence="2 6">Homotetramer. Associates with late pre-40S ribosomes. Interacts with CEP78; promoting deubiquitination of tektins (PubMed:36206347).</text>
</comment>
<comment type="subcellular location">
    <subcellularLocation>
        <location evidence="2">Nucleus</location>
    </subcellularLocation>
    <subcellularLocation>
        <location evidence="2">Cytoplasm</location>
    </subcellularLocation>
</comment>
<comment type="domain">
    <text evidence="2">The UBP-type zinc finger binds 3 zinc ions that form a pair of cross-braced ring fingers encapsulated within a third zinc finger in the primary structure. It recognizes the C-terminal tail of free ubiquitin.</text>
</comment>
<comment type="PTM">
    <text evidence="2 5">Phosphorylated at the onset of mitosis and dephosphorylated during the metaphase/anaphase transition. Phosphorylation by AURKB enhances the deubiquitinase activity.</text>
</comment>
<comment type="miscellaneous">
    <text evidence="8">Usp16 acts as a regulator of stem cell self-renewal and its overexpression contributes to somatic stem cell defects observed in Down syndrome models in mouse. Usp16 is triplicated in Ts65D Down syndrome mouse model and its overexpression leads to reduce the self-renewal of haematopoietic stem cells and the expansion of mammary epithelial cells, neural progenitors and fibroblasts. Defects are rescued by down-regulating Usp16 in Ts65D mice by short interfering RNAs (PubMed:24025767).</text>
</comment>
<comment type="similarity">
    <text evidence="2">Belongs to the peptidase C19 family. USP16 subfamily.</text>
</comment>
<keyword id="KW-0010">Activator</keyword>
<keyword id="KW-0131">Cell cycle</keyword>
<keyword id="KW-0132">Cell division</keyword>
<keyword id="KW-0156">Chromatin regulator</keyword>
<keyword id="KW-0963">Cytoplasm</keyword>
<keyword id="KW-0378">Hydrolase</keyword>
<keyword id="KW-1017">Isopeptide bond</keyword>
<keyword id="KW-0479">Metal-binding</keyword>
<keyword id="KW-0498">Mitosis</keyword>
<keyword id="KW-0539">Nucleus</keyword>
<keyword id="KW-0597">Phosphoprotein</keyword>
<keyword id="KW-0645">Protease</keyword>
<keyword id="KW-1185">Reference proteome</keyword>
<keyword id="KW-0788">Thiol protease</keyword>
<keyword id="KW-0804">Transcription</keyword>
<keyword id="KW-0805">Transcription regulation</keyword>
<keyword id="KW-0832">Ubl conjugation</keyword>
<keyword id="KW-0833">Ubl conjugation pathway</keyword>
<keyword id="KW-0862">Zinc</keyword>
<keyword id="KW-0863">Zinc-finger</keyword>
<proteinExistence type="evidence at protein level"/>